<reference key="1">
    <citation type="journal article" date="2005" name="Nat. Biotechnol.">
        <title>The complete genome sequence of the meat-borne lactic acid bacterium Lactobacillus sakei 23K.</title>
        <authorList>
            <person name="Chaillou S."/>
            <person name="Champomier-Verges M.-C."/>
            <person name="Cornet M."/>
            <person name="Crutz-Le Coq A.-M."/>
            <person name="Dudez A.-M."/>
            <person name="Martin V."/>
            <person name="Beaufils S."/>
            <person name="Darbon-Rongere E."/>
            <person name="Bossy R."/>
            <person name="Loux V."/>
            <person name="Zagorec M."/>
        </authorList>
    </citation>
    <scope>NUCLEOTIDE SEQUENCE [LARGE SCALE GENOMIC DNA]</scope>
    <source>
        <strain>23K</strain>
    </source>
</reference>
<comment type="function">
    <text evidence="1">Involved in the regulation of the intracellular balance of NAD and NADP, and is a key enzyme in the biosynthesis of NADP. Catalyzes specifically the phosphorylation on 2'-hydroxyl of the adenosine moiety of NAD to yield NADP.</text>
</comment>
<comment type="catalytic activity">
    <reaction evidence="1">
        <text>NAD(+) + ATP = ADP + NADP(+) + H(+)</text>
        <dbReference type="Rhea" id="RHEA:18629"/>
        <dbReference type="ChEBI" id="CHEBI:15378"/>
        <dbReference type="ChEBI" id="CHEBI:30616"/>
        <dbReference type="ChEBI" id="CHEBI:57540"/>
        <dbReference type="ChEBI" id="CHEBI:58349"/>
        <dbReference type="ChEBI" id="CHEBI:456216"/>
        <dbReference type="EC" id="2.7.1.23"/>
    </reaction>
</comment>
<comment type="cofactor">
    <cofactor evidence="1">
        <name>a divalent metal cation</name>
        <dbReference type="ChEBI" id="CHEBI:60240"/>
    </cofactor>
</comment>
<comment type="subcellular location">
    <subcellularLocation>
        <location evidence="1">Cytoplasm</location>
    </subcellularLocation>
</comment>
<comment type="similarity">
    <text evidence="1">Belongs to the NAD kinase family.</text>
</comment>
<evidence type="ECO:0000255" key="1">
    <source>
        <dbReference type="HAMAP-Rule" id="MF_00361"/>
    </source>
</evidence>
<gene>
    <name evidence="1" type="primary">nadK</name>
    <name type="ordered locus">LCA_1443</name>
</gene>
<name>NADK_LATSS</name>
<proteinExistence type="inferred from homology"/>
<protein>
    <recommendedName>
        <fullName evidence="1">NAD kinase</fullName>
        <ecNumber evidence="1">2.7.1.23</ecNumber>
    </recommendedName>
    <alternativeName>
        <fullName evidence="1">ATP-dependent NAD kinase</fullName>
    </alternativeName>
</protein>
<feature type="chain" id="PRO_0000229648" description="NAD kinase">
    <location>
        <begin position="1"/>
        <end position="268"/>
    </location>
</feature>
<feature type="active site" description="Proton acceptor" evidence="1">
    <location>
        <position position="45"/>
    </location>
</feature>
<feature type="binding site" evidence="1">
    <location>
        <begin position="45"/>
        <end position="46"/>
    </location>
    <ligand>
        <name>NAD(+)</name>
        <dbReference type="ChEBI" id="CHEBI:57540"/>
    </ligand>
</feature>
<feature type="binding site" evidence="1">
    <location>
        <begin position="122"/>
        <end position="123"/>
    </location>
    <ligand>
        <name>NAD(+)</name>
        <dbReference type="ChEBI" id="CHEBI:57540"/>
    </ligand>
</feature>
<feature type="binding site" evidence="1">
    <location>
        <position position="148"/>
    </location>
    <ligand>
        <name>NAD(+)</name>
        <dbReference type="ChEBI" id="CHEBI:57540"/>
    </ligand>
</feature>
<feature type="binding site" evidence="1">
    <location>
        <position position="150"/>
    </location>
    <ligand>
        <name>NAD(+)</name>
        <dbReference type="ChEBI" id="CHEBI:57540"/>
    </ligand>
</feature>
<feature type="binding site" evidence="1">
    <location>
        <begin position="161"/>
        <end position="166"/>
    </location>
    <ligand>
        <name>NAD(+)</name>
        <dbReference type="ChEBI" id="CHEBI:57540"/>
    </ligand>
</feature>
<feature type="binding site" evidence="1">
    <location>
        <position position="185"/>
    </location>
    <ligand>
        <name>NAD(+)</name>
        <dbReference type="ChEBI" id="CHEBI:57540"/>
    </ligand>
</feature>
<feature type="binding site" evidence="1">
    <location>
        <position position="223"/>
    </location>
    <ligand>
        <name>NAD(+)</name>
        <dbReference type="ChEBI" id="CHEBI:57540"/>
    </ligand>
</feature>
<dbReference type="EC" id="2.7.1.23" evidence="1"/>
<dbReference type="EMBL" id="CR936503">
    <property type="protein sequence ID" value="CAI55745.1"/>
    <property type="molecule type" value="Genomic_DNA"/>
</dbReference>
<dbReference type="RefSeq" id="WP_011375135.1">
    <property type="nucleotide sequence ID" value="NC_007576.1"/>
</dbReference>
<dbReference type="SMR" id="Q38VN8"/>
<dbReference type="STRING" id="314315.LCA_1443"/>
<dbReference type="KEGG" id="lsa:LCA_1443"/>
<dbReference type="eggNOG" id="COG0061">
    <property type="taxonomic scope" value="Bacteria"/>
</dbReference>
<dbReference type="HOGENOM" id="CLU_008831_0_3_9"/>
<dbReference type="OrthoDB" id="9774737at2"/>
<dbReference type="Proteomes" id="UP000002707">
    <property type="component" value="Chromosome"/>
</dbReference>
<dbReference type="GO" id="GO:0005737">
    <property type="term" value="C:cytoplasm"/>
    <property type="evidence" value="ECO:0007669"/>
    <property type="project" value="UniProtKB-SubCell"/>
</dbReference>
<dbReference type="GO" id="GO:0005524">
    <property type="term" value="F:ATP binding"/>
    <property type="evidence" value="ECO:0007669"/>
    <property type="project" value="UniProtKB-KW"/>
</dbReference>
<dbReference type="GO" id="GO:0046872">
    <property type="term" value="F:metal ion binding"/>
    <property type="evidence" value="ECO:0007669"/>
    <property type="project" value="UniProtKB-UniRule"/>
</dbReference>
<dbReference type="GO" id="GO:0051287">
    <property type="term" value="F:NAD binding"/>
    <property type="evidence" value="ECO:0007669"/>
    <property type="project" value="UniProtKB-ARBA"/>
</dbReference>
<dbReference type="GO" id="GO:0003951">
    <property type="term" value="F:NAD+ kinase activity"/>
    <property type="evidence" value="ECO:0007669"/>
    <property type="project" value="UniProtKB-UniRule"/>
</dbReference>
<dbReference type="GO" id="GO:0019674">
    <property type="term" value="P:NAD metabolic process"/>
    <property type="evidence" value="ECO:0007669"/>
    <property type="project" value="InterPro"/>
</dbReference>
<dbReference type="GO" id="GO:0006741">
    <property type="term" value="P:NADP biosynthetic process"/>
    <property type="evidence" value="ECO:0007669"/>
    <property type="project" value="UniProtKB-UniRule"/>
</dbReference>
<dbReference type="Gene3D" id="3.40.50.10330">
    <property type="entry name" value="Probable inorganic polyphosphate/atp-NAD kinase, domain 1"/>
    <property type="match status" value="1"/>
</dbReference>
<dbReference type="Gene3D" id="2.60.200.30">
    <property type="entry name" value="Probable inorganic polyphosphate/atp-NAD kinase, domain 2"/>
    <property type="match status" value="1"/>
</dbReference>
<dbReference type="HAMAP" id="MF_00361">
    <property type="entry name" value="NAD_kinase"/>
    <property type="match status" value="1"/>
</dbReference>
<dbReference type="InterPro" id="IPR017438">
    <property type="entry name" value="ATP-NAD_kinase_N"/>
</dbReference>
<dbReference type="InterPro" id="IPR017437">
    <property type="entry name" value="ATP-NAD_kinase_PpnK-typ_C"/>
</dbReference>
<dbReference type="InterPro" id="IPR016064">
    <property type="entry name" value="NAD/diacylglycerol_kinase_sf"/>
</dbReference>
<dbReference type="InterPro" id="IPR002504">
    <property type="entry name" value="NADK"/>
</dbReference>
<dbReference type="NCBIfam" id="NF003424">
    <property type="entry name" value="PRK04885.1"/>
    <property type="match status" value="1"/>
</dbReference>
<dbReference type="PANTHER" id="PTHR20275">
    <property type="entry name" value="NAD KINASE"/>
    <property type="match status" value="1"/>
</dbReference>
<dbReference type="PANTHER" id="PTHR20275:SF0">
    <property type="entry name" value="NAD KINASE"/>
    <property type="match status" value="1"/>
</dbReference>
<dbReference type="Pfam" id="PF01513">
    <property type="entry name" value="NAD_kinase"/>
    <property type="match status" value="1"/>
</dbReference>
<dbReference type="Pfam" id="PF20143">
    <property type="entry name" value="NAD_kinase_C"/>
    <property type="match status" value="1"/>
</dbReference>
<dbReference type="SUPFAM" id="SSF111331">
    <property type="entry name" value="NAD kinase/diacylglycerol kinase-like"/>
    <property type="match status" value="1"/>
</dbReference>
<keyword id="KW-0067">ATP-binding</keyword>
<keyword id="KW-0963">Cytoplasm</keyword>
<keyword id="KW-0418">Kinase</keyword>
<keyword id="KW-0520">NAD</keyword>
<keyword id="KW-0521">NADP</keyword>
<keyword id="KW-0547">Nucleotide-binding</keyword>
<keyword id="KW-1185">Reference proteome</keyword>
<keyword id="KW-0808">Transferase</keyword>
<sequence>MRITVYSNDGSSSRQVADKLTNKLINNGFTMDAQTPEVVISVGGDGTLLSAFHRYADALDQIRFIGVHTGHLGFYTDWRDFEVDDLVVALQEDLGQSISYPLLEVKITYADTNEVQHFLALNEVTLRRYAATLRTDVYIKENFFESFRGDGLCVSTPTGSTAYGKSIGGAVLHPRLEAMQLTEIASINNRVYRTLAAPIVLPSDEWLLLKPSRTSDYVVTIDQFTFKDRPIESMQFKIAKERIQFARYRHTHFWDRVEDAFIGSKHEI</sequence>
<organism>
    <name type="scientific">Latilactobacillus sakei subsp. sakei (strain 23K)</name>
    <name type="common">Lactobacillus sakei subsp. sakei</name>
    <dbReference type="NCBI Taxonomy" id="314315"/>
    <lineage>
        <taxon>Bacteria</taxon>
        <taxon>Bacillati</taxon>
        <taxon>Bacillota</taxon>
        <taxon>Bacilli</taxon>
        <taxon>Lactobacillales</taxon>
        <taxon>Lactobacillaceae</taxon>
        <taxon>Latilactobacillus</taxon>
    </lineage>
</organism>
<accession>Q38VN8</accession>